<organism>
    <name type="scientific">Shewanella baltica (strain OS185)</name>
    <dbReference type="NCBI Taxonomy" id="402882"/>
    <lineage>
        <taxon>Bacteria</taxon>
        <taxon>Pseudomonadati</taxon>
        <taxon>Pseudomonadota</taxon>
        <taxon>Gammaproteobacteria</taxon>
        <taxon>Alteromonadales</taxon>
        <taxon>Shewanellaceae</taxon>
        <taxon>Shewanella</taxon>
    </lineage>
</organism>
<keyword id="KW-0066">ATP synthesis</keyword>
<keyword id="KW-0997">Cell inner membrane</keyword>
<keyword id="KW-1003">Cell membrane</keyword>
<keyword id="KW-0138">CF(0)</keyword>
<keyword id="KW-0375">Hydrogen ion transport</keyword>
<keyword id="KW-0406">Ion transport</keyword>
<keyword id="KW-0472">Membrane</keyword>
<keyword id="KW-0812">Transmembrane</keyword>
<keyword id="KW-1133">Transmembrane helix</keyword>
<keyword id="KW-0813">Transport</keyword>
<evidence type="ECO:0000255" key="1">
    <source>
        <dbReference type="HAMAP-Rule" id="MF_01398"/>
    </source>
</evidence>
<accession>A6WUJ4</accession>
<dbReference type="EMBL" id="CP000753">
    <property type="protein sequence ID" value="ABS10483.1"/>
    <property type="molecule type" value="Genomic_DNA"/>
</dbReference>
<dbReference type="RefSeq" id="WP_006083841.1">
    <property type="nucleotide sequence ID" value="NC_009665.1"/>
</dbReference>
<dbReference type="SMR" id="A6WUJ4"/>
<dbReference type="GeneID" id="11774464"/>
<dbReference type="KEGG" id="sbm:Shew185_4369"/>
<dbReference type="HOGENOM" id="CLU_079215_4_5_6"/>
<dbReference type="GO" id="GO:0005886">
    <property type="term" value="C:plasma membrane"/>
    <property type="evidence" value="ECO:0007669"/>
    <property type="project" value="UniProtKB-SubCell"/>
</dbReference>
<dbReference type="GO" id="GO:0045259">
    <property type="term" value="C:proton-transporting ATP synthase complex"/>
    <property type="evidence" value="ECO:0007669"/>
    <property type="project" value="UniProtKB-KW"/>
</dbReference>
<dbReference type="GO" id="GO:0046933">
    <property type="term" value="F:proton-transporting ATP synthase activity, rotational mechanism"/>
    <property type="evidence" value="ECO:0007669"/>
    <property type="project" value="UniProtKB-UniRule"/>
</dbReference>
<dbReference type="GO" id="GO:0046961">
    <property type="term" value="F:proton-transporting ATPase activity, rotational mechanism"/>
    <property type="evidence" value="ECO:0007669"/>
    <property type="project" value="TreeGrafter"/>
</dbReference>
<dbReference type="CDD" id="cd06503">
    <property type="entry name" value="ATP-synt_Fo_b"/>
    <property type="match status" value="1"/>
</dbReference>
<dbReference type="Gene3D" id="6.10.250.1580">
    <property type="match status" value="1"/>
</dbReference>
<dbReference type="HAMAP" id="MF_01398">
    <property type="entry name" value="ATP_synth_b_bprime"/>
    <property type="match status" value="1"/>
</dbReference>
<dbReference type="InterPro" id="IPR028987">
    <property type="entry name" value="ATP_synth_B-like_membr_sf"/>
</dbReference>
<dbReference type="InterPro" id="IPR002146">
    <property type="entry name" value="ATP_synth_b/b'su_bac/chlpt"/>
</dbReference>
<dbReference type="InterPro" id="IPR005864">
    <property type="entry name" value="ATP_synth_F0_bsu_bac"/>
</dbReference>
<dbReference type="InterPro" id="IPR050059">
    <property type="entry name" value="ATP_synthase_B_chain"/>
</dbReference>
<dbReference type="NCBIfam" id="TIGR01144">
    <property type="entry name" value="ATP_synt_b"/>
    <property type="match status" value="1"/>
</dbReference>
<dbReference type="NCBIfam" id="NF004411">
    <property type="entry name" value="PRK05759.1-2"/>
    <property type="match status" value="1"/>
</dbReference>
<dbReference type="NCBIfam" id="NF004413">
    <property type="entry name" value="PRK05759.1-4"/>
    <property type="match status" value="1"/>
</dbReference>
<dbReference type="PANTHER" id="PTHR33445:SF1">
    <property type="entry name" value="ATP SYNTHASE SUBUNIT B"/>
    <property type="match status" value="1"/>
</dbReference>
<dbReference type="PANTHER" id="PTHR33445">
    <property type="entry name" value="ATP SYNTHASE SUBUNIT B', CHLOROPLASTIC"/>
    <property type="match status" value="1"/>
</dbReference>
<dbReference type="Pfam" id="PF00430">
    <property type="entry name" value="ATP-synt_B"/>
    <property type="match status" value="1"/>
</dbReference>
<dbReference type="SUPFAM" id="SSF81573">
    <property type="entry name" value="F1F0 ATP synthase subunit B, membrane domain"/>
    <property type="match status" value="1"/>
</dbReference>
<proteinExistence type="inferred from homology"/>
<comment type="function">
    <text evidence="1">F(1)F(0) ATP synthase produces ATP from ADP in the presence of a proton or sodium gradient. F-type ATPases consist of two structural domains, F(1) containing the extramembraneous catalytic core and F(0) containing the membrane proton channel, linked together by a central stalk and a peripheral stalk. During catalysis, ATP synthesis in the catalytic domain of F(1) is coupled via a rotary mechanism of the central stalk subunits to proton translocation.</text>
</comment>
<comment type="function">
    <text evidence="1">Component of the F(0) channel, it forms part of the peripheral stalk, linking F(1) to F(0).</text>
</comment>
<comment type="subunit">
    <text evidence="1">F-type ATPases have 2 components, F(1) - the catalytic core - and F(0) - the membrane proton channel. F(1) has five subunits: alpha(3), beta(3), gamma(1), delta(1), epsilon(1). F(0) has three main subunits: a(1), b(2) and c(10-14). The alpha and beta chains form an alternating ring which encloses part of the gamma chain. F(1) is attached to F(0) by a central stalk formed by the gamma and epsilon chains, while a peripheral stalk is formed by the delta and b chains.</text>
</comment>
<comment type="subcellular location">
    <subcellularLocation>
        <location evidence="1">Cell inner membrane</location>
        <topology evidence="1">Single-pass membrane protein</topology>
    </subcellularLocation>
</comment>
<comment type="similarity">
    <text evidence="1">Belongs to the ATPase B chain family.</text>
</comment>
<sequence>MNFNATLIGQTVAFIIFVWFCMKFVWPPLMNAIEERQKRIADGLADADRAVKDLELAQAKATDQLKEAKVTANEIIEQANKRKAQIVEEAKTEADAERAKIIAQGKAEIEAERNRVKEDLRKQVATLAIMGAEKILERSIDPAAHSDIVNKLVAEI</sequence>
<reference key="1">
    <citation type="submission" date="2007-07" db="EMBL/GenBank/DDBJ databases">
        <title>Complete sequence of chromosome of Shewanella baltica OS185.</title>
        <authorList>
            <consortium name="US DOE Joint Genome Institute"/>
            <person name="Copeland A."/>
            <person name="Lucas S."/>
            <person name="Lapidus A."/>
            <person name="Barry K."/>
            <person name="Glavina del Rio T."/>
            <person name="Dalin E."/>
            <person name="Tice H."/>
            <person name="Pitluck S."/>
            <person name="Sims D."/>
            <person name="Brettin T."/>
            <person name="Bruce D."/>
            <person name="Detter J.C."/>
            <person name="Han C."/>
            <person name="Schmutz J."/>
            <person name="Larimer F."/>
            <person name="Land M."/>
            <person name="Hauser L."/>
            <person name="Kyrpides N."/>
            <person name="Mikhailova N."/>
            <person name="Brettar I."/>
            <person name="Rodrigues J."/>
            <person name="Konstantinidis K."/>
            <person name="Tiedje J."/>
            <person name="Richardson P."/>
        </authorList>
    </citation>
    <scope>NUCLEOTIDE SEQUENCE [LARGE SCALE GENOMIC DNA]</scope>
    <source>
        <strain>OS185</strain>
    </source>
</reference>
<protein>
    <recommendedName>
        <fullName evidence="1">ATP synthase subunit b</fullName>
    </recommendedName>
    <alternativeName>
        <fullName evidence="1">ATP synthase F(0) sector subunit b</fullName>
    </alternativeName>
    <alternativeName>
        <fullName evidence="1">ATPase subunit I</fullName>
    </alternativeName>
    <alternativeName>
        <fullName evidence="1">F-type ATPase subunit b</fullName>
        <shortName evidence="1">F-ATPase subunit b</shortName>
    </alternativeName>
</protein>
<feature type="chain" id="PRO_0000368755" description="ATP synthase subunit b">
    <location>
        <begin position="1"/>
        <end position="156"/>
    </location>
</feature>
<feature type="transmembrane region" description="Helical" evidence="1">
    <location>
        <begin position="7"/>
        <end position="27"/>
    </location>
</feature>
<name>ATPF_SHEB8</name>
<gene>
    <name evidence="1" type="primary">atpF</name>
    <name type="ordered locus">Shew185_4369</name>
</gene>